<feature type="chain" id="PRO_1000200806" description="Multidrug resistance protein MdtH">
    <location>
        <begin position="1"/>
        <end position="402"/>
    </location>
</feature>
<feature type="topological domain" description="Cytoplasmic" evidence="1">
    <location>
        <begin position="1"/>
        <end position="12"/>
    </location>
</feature>
<feature type="transmembrane region" description="Helical" evidence="1">
    <location>
        <begin position="13"/>
        <end position="33"/>
    </location>
</feature>
<feature type="topological domain" description="Periplasmic" evidence="1">
    <location>
        <begin position="34"/>
        <end position="98"/>
    </location>
</feature>
<feature type="transmembrane region" description="Helical" evidence="1">
    <location>
        <begin position="99"/>
        <end position="116"/>
    </location>
</feature>
<feature type="topological domain" description="Cytoplasmic" evidence="1">
    <location>
        <begin position="117"/>
        <end position="138"/>
    </location>
</feature>
<feature type="transmembrane region" description="Helical" evidence="1">
    <location>
        <begin position="139"/>
        <end position="159"/>
    </location>
</feature>
<feature type="topological domain" description="Periplasmic" evidence="1">
    <location>
        <begin position="160"/>
        <end position="164"/>
    </location>
</feature>
<feature type="transmembrane region" description="Helical" evidence="1">
    <location>
        <begin position="165"/>
        <end position="185"/>
    </location>
</feature>
<feature type="topological domain" description="Cytoplasmic" evidence="1">
    <location>
        <begin position="186"/>
        <end position="213"/>
    </location>
</feature>
<feature type="transmembrane region" description="Helical" evidence="1">
    <location>
        <begin position="214"/>
        <end position="234"/>
    </location>
</feature>
<feature type="topological domain" description="Periplasmic" evidence="1">
    <location>
        <begin position="235"/>
        <end position="243"/>
    </location>
</feature>
<feature type="transmembrane region" description="Helical" evidence="1">
    <location>
        <begin position="244"/>
        <end position="264"/>
    </location>
</feature>
<feature type="topological domain" description="Cytoplasmic" evidence="1">
    <location>
        <begin position="265"/>
        <end position="276"/>
    </location>
</feature>
<feature type="transmembrane region" description="Helical" evidence="1">
    <location>
        <begin position="277"/>
        <end position="297"/>
    </location>
</feature>
<feature type="topological domain" description="Periplasmic" evidence="1">
    <location>
        <begin position="298"/>
        <end position="299"/>
    </location>
</feature>
<feature type="transmembrane region" description="Helical" evidence="1">
    <location>
        <begin position="300"/>
        <end position="320"/>
    </location>
</feature>
<feature type="topological domain" description="Cytoplasmic" evidence="1">
    <location>
        <begin position="321"/>
        <end position="339"/>
    </location>
</feature>
<feature type="transmembrane region" description="Helical" evidence="1">
    <location>
        <begin position="340"/>
        <end position="360"/>
    </location>
</feature>
<feature type="topological domain" description="Periplasmic" evidence="1">
    <location>
        <begin position="361"/>
        <end position="367"/>
    </location>
</feature>
<feature type="transmembrane region" description="Helical" evidence="1">
    <location>
        <begin position="368"/>
        <end position="388"/>
    </location>
</feature>
<feature type="topological domain" description="Cytoplasmic" evidence="1">
    <location>
        <begin position="389"/>
        <end position="402"/>
    </location>
</feature>
<keyword id="KW-0997">Cell inner membrane</keyword>
<keyword id="KW-1003">Cell membrane</keyword>
<keyword id="KW-0472">Membrane</keyword>
<keyword id="KW-0812">Transmembrane</keyword>
<keyword id="KW-1133">Transmembrane helix</keyword>
<keyword id="KW-0813">Transport</keyword>
<organism>
    <name type="scientific">Salmonella enteritidis PT4 (strain P125109)</name>
    <dbReference type="NCBI Taxonomy" id="550537"/>
    <lineage>
        <taxon>Bacteria</taxon>
        <taxon>Pseudomonadati</taxon>
        <taxon>Pseudomonadota</taxon>
        <taxon>Gammaproteobacteria</taxon>
        <taxon>Enterobacterales</taxon>
        <taxon>Enterobacteriaceae</taxon>
        <taxon>Salmonella</taxon>
    </lineage>
</organism>
<comment type="subcellular location">
    <subcellularLocation>
        <location evidence="1">Cell inner membrane</location>
        <topology evidence="1">Multi-pass membrane protein</topology>
    </subcellularLocation>
</comment>
<comment type="similarity">
    <text evidence="1">Belongs to the major facilitator superfamily. DHA1 family. MdtH (TC 2.A.1.2.21) subfamily.</text>
</comment>
<evidence type="ECO:0000255" key="1">
    <source>
        <dbReference type="HAMAP-Rule" id="MF_01529"/>
    </source>
</evidence>
<proteinExistence type="inferred from homology"/>
<accession>B5QXZ9</accession>
<protein>
    <recommendedName>
        <fullName evidence="1">Multidrug resistance protein MdtH</fullName>
    </recommendedName>
</protein>
<gene>
    <name evidence="1" type="primary">mdtH</name>
    <name type="ordered locus">SEN1882</name>
</gene>
<sequence length="402" mass="44384">MSRVSQARNLGKYFLLIDNMLVVLGFFVVFPLISIRFVDQMGWAAVMVGIALGLRQFIQQGLGIFGGAIADRFGAKPMIVTGMLMRAAGFATMGIAHEPWLLWFSCFLSGLGGTLFDPPRSALVVKLIRPEQRGRFFSLLMMQDSAGAVIGALLGSWLLQYDFRLVCATGAILFILCALFNAWLLPAWKLSTVRTPVREGMRRVMSDKRFVTYVLTLAGYYMLAVQVMLMLPIMVNDIAGSPAAVKWMYAIEACLSLTLLYPIARWSEKRFRLEHRLMAGLLVMSLSMLPIGMVGNLQQLFTLICAFYIGSVIAEPARETLSASLADARARGSYMGFSRLGLAIGGAIGYIGGGWLFDMGKALAQPELPWMMLGIIGFITFLALGWQFSHKRTPRRMLEPGA</sequence>
<name>MDTH_SALEP</name>
<dbReference type="EMBL" id="AM933172">
    <property type="protein sequence ID" value="CAR33462.1"/>
    <property type="molecule type" value="Genomic_DNA"/>
</dbReference>
<dbReference type="RefSeq" id="WP_000092178.1">
    <property type="nucleotide sequence ID" value="NC_011294.1"/>
</dbReference>
<dbReference type="SMR" id="B5QXZ9"/>
<dbReference type="KEGG" id="set:SEN1882"/>
<dbReference type="HOGENOM" id="CLU_001265_60_2_6"/>
<dbReference type="Proteomes" id="UP000000613">
    <property type="component" value="Chromosome"/>
</dbReference>
<dbReference type="GO" id="GO:0005886">
    <property type="term" value="C:plasma membrane"/>
    <property type="evidence" value="ECO:0007669"/>
    <property type="project" value="UniProtKB-SubCell"/>
</dbReference>
<dbReference type="GO" id="GO:0022857">
    <property type="term" value="F:transmembrane transporter activity"/>
    <property type="evidence" value="ECO:0007669"/>
    <property type="project" value="UniProtKB-UniRule"/>
</dbReference>
<dbReference type="CDD" id="cd17329">
    <property type="entry name" value="MFS_MdtH_MDR_like"/>
    <property type="match status" value="1"/>
</dbReference>
<dbReference type="FunFam" id="1.20.1250.20:FF:000039">
    <property type="entry name" value="Multidrug resistance protein MdtH"/>
    <property type="match status" value="1"/>
</dbReference>
<dbReference type="Gene3D" id="1.20.1250.20">
    <property type="entry name" value="MFS general substrate transporter like domains"/>
    <property type="match status" value="1"/>
</dbReference>
<dbReference type="HAMAP" id="MF_01529">
    <property type="entry name" value="MFS_MdtH"/>
    <property type="match status" value="1"/>
</dbReference>
<dbReference type="InterPro" id="IPR011701">
    <property type="entry name" value="MFS"/>
</dbReference>
<dbReference type="InterPro" id="IPR020846">
    <property type="entry name" value="MFS_dom"/>
</dbReference>
<dbReference type="InterPro" id="IPR036259">
    <property type="entry name" value="MFS_trans_sf"/>
</dbReference>
<dbReference type="InterPro" id="IPR050171">
    <property type="entry name" value="MFS_Transporters"/>
</dbReference>
<dbReference type="InterPro" id="IPR022855">
    <property type="entry name" value="Multidrug-R_MdtH"/>
</dbReference>
<dbReference type="NCBIfam" id="NF008650">
    <property type="entry name" value="PRK11646.1"/>
    <property type="match status" value="1"/>
</dbReference>
<dbReference type="PANTHER" id="PTHR23517:SF2">
    <property type="entry name" value="MULTIDRUG RESISTANCE PROTEIN MDTH"/>
    <property type="match status" value="1"/>
</dbReference>
<dbReference type="PANTHER" id="PTHR23517">
    <property type="entry name" value="RESISTANCE PROTEIN MDTM, PUTATIVE-RELATED-RELATED"/>
    <property type="match status" value="1"/>
</dbReference>
<dbReference type="Pfam" id="PF07690">
    <property type="entry name" value="MFS_1"/>
    <property type="match status" value="1"/>
</dbReference>
<dbReference type="SUPFAM" id="SSF103473">
    <property type="entry name" value="MFS general substrate transporter"/>
    <property type="match status" value="1"/>
</dbReference>
<dbReference type="PROSITE" id="PS50850">
    <property type="entry name" value="MFS"/>
    <property type="match status" value="1"/>
</dbReference>
<reference key="1">
    <citation type="journal article" date="2008" name="Genome Res.">
        <title>Comparative genome analysis of Salmonella enteritidis PT4 and Salmonella gallinarum 287/91 provides insights into evolutionary and host adaptation pathways.</title>
        <authorList>
            <person name="Thomson N.R."/>
            <person name="Clayton D.J."/>
            <person name="Windhorst D."/>
            <person name="Vernikos G."/>
            <person name="Davidson S."/>
            <person name="Churcher C."/>
            <person name="Quail M.A."/>
            <person name="Stevens M."/>
            <person name="Jones M.A."/>
            <person name="Watson M."/>
            <person name="Barron A."/>
            <person name="Layton A."/>
            <person name="Pickard D."/>
            <person name="Kingsley R.A."/>
            <person name="Bignell A."/>
            <person name="Clark L."/>
            <person name="Harris B."/>
            <person name="Ormond D."/>
            <person name="Abdellah Z."/>
            <person name="Brooks K."/>
            <person name="Cherevach I."/>
            <person name="Chillingworth T."/>
            <person name="Woodward J."/>
            <person name="Norberczak H."/>
            <person name="Lord A."/>
            <person name="Arrowsmith C."/>
            <person name="Jagels K."/>
            <person name="Moule S."/>
            <person name="Mungall K."/>
            <person name="Saunders M."/>
            <person name="Whitehead S."/>
            <person name="Chabalgoity J.A."/>
            <person name="Maskell D."/>
            <person name="Humphreys T."/>
            <person name="Roberts M."/>
            <person name="Barrow P.A."/>
            <person name="Dougan G."/>
            <person name="Parkhill J."/>
        </authorList>
    </citation>
    <scope>NUCLEOTIDE SEQUENCE [LARGE SCALE GENOMIC DNA]</scope>
    <source>
        <strain>P125109</strain>
    </source>
</reference>